<accession>B9KJP1</accession>
<organism>
    <name type="scientific">Cereibacter sphaeroides (strain KD131 / KCTC 12085)</name>
    <name type="common">Rhodobacter sphaeroides</name>
    <dbReference type="NCBI Taxonomy" id="557760"/>
    <lineage>
        <taxon>Bacteria</taxon>
        <taxon>Pseudomonadati</taxon>
        <taxon>Pseudomonadota</taxon>
        <taxon>Alphaproteobacteria</taxon>
        <taxon>Rhodobacterales</taxon>
        <taxon>Paracoccaceae</taxon>
        <taxon>Cereibacter</taxon>
    </lineage>
</organism>
<comment type="function">
    <text evidence="1">Binds as a heterodimer with protein bS6 to the central domain of the 16S rRNA, where it helps stabilize the platform of the 30S subunit.</text>
</comment>
<comment type="subunit">
    <text evidence="1">Part of the 30S ribosomal subunit. Forms a tight heterodimer with protein bS6.</text>
</comment>
<comment type="similarity">
    <text evidence="1">Belongs to the bacterial ribosomal protein bS18 family.</text>
</comment>
<feature type="chain" id="PRO_1000196526" description="Small ribosomal subunit protein bS18">
    <location>
        <begin position="1"/>
        <end position="75"/>
    </location>
</feature>
<gene>
    <name evidence="1" type="primary">rpsR</name>
    <name type="ordered locus">RSKD131_1478</name>
</gene>
<evidence type="ECO:0000255" key="1">
    <source>
        <dbReference type="HAMAP-Rule" id="MF_00270"/>
    </source>
</evidence>
<evidence type="ECO:0000305" key="2"/>
<protein>
    <recommendedName>
        <fullName evidence="1">Small ribosomal subunit protein bS18</fullName>
    </recommendedName>
    <alternativeName>
        <fullName evidence="2">30S ribosomal protein S18</fullName>
    </alternativeName>
</protein>
<name>RS18_CERSK</name>
<reference key="1">
    <citation type="journal article" date="2009" name="J. Bacteriol.">
        <title>Complete genome sequence of Rhodobacter sphaeroides KD131.</title>
        <authorList>
            <person name="Lim S.-K."/>
            <person name="Kim S.J."/>
            <person name="Cha S.H."/>
            <person name="Oh Y.-K."/>
            <person name="Rhee H.-J."/>
            <person name="Kim M.-S."/>
            <person name="Lee J.K."/>
        </authorList>
    </citation>
    <scope>NUCLEOTIDE SEQUENCE [LARGE SCALE GENOMIC DNA]</scope>
    <source>
        <strain>KD131 / KCTC 12085</strain>
    </source>
</reference>
<proteinExistence type="inferred from homology"/>
<dbReference type="EMBL" id="CP001150">
    <property type="protein sequence ID" value="ACM01338.1"/>
    <property type="molecule type" value="Genomic_DNA"/>
</dbReference>
<dbReference type="RefSeq" id="WP_015920766.1">
    <property type="nucleotide sequence ID" value="NC_011963.1"/>
</dbReference>
<dbReference type="SMR" id="B9KJP1"/>
<dbReference type="KEGG" id="rsk:RSKD131_1478"/>
<dbReference type="HOGENOM" id="CLU_148710_2_3_5"/>
<dbReference type="GO" id="GO:0022627">
    <property type="term" value="C:cytosolic small ribosomal subunit"/>
    <property type="evidence" value="ECO:0007669"/>
    <property type="project" value="TreeGrafter"/>
</dbReference>
<dbReference type="GO" id="GO:0070181">
    <property type="term" value="F:small ribosomal subunit rRNA binding"/>
    <property type="evidence" value="ECO:0007669"/>
    <property type="project" value="TreeGrafter"/>
</dbReference>
<dbReference type="GO" id="GO:0003735">
    <property type="term" value="F:structural constituent of ribosome"/>
    <property type="evidence" value="ECO:0007669"/>
    <property type="project" value="InterPro"/>
</dbReference>
<dbReference type="GO" id="GO:0006412">
    <property type="term" value="P:translation"/>
    <property type="evidence" value="ECO:0007669"/>
    <property type="project" value="UniProtKB-UniRule"/>
</dbReference>
<dbReference type="Gene3D" id="4.10.640.10">
    <property type="entry name" value="Ribosomal protein S18"/>
    <property type="match status" value="1"/>
</dbReference>
<dbReference type="HAMAP" id="MF_00270">
    <property type="entry name" value="Ribosomal_bS18"/>
    <property type="match status" value="1"/>
</dbReference>
<dbReference type="InterPro" id="IPR001648">
    <property type="entry name" value="Ribosomal_bS18"/>
</dbReference>
<dbReference type="InterPro" id="IPR018275">
    <property type="entry name" value="Ribosomal_bS18_CS"/>
</dbReference>
<dbReference type="InterPro" id="IPR036870">
    <property type="entry name" value="Ribosomal_bS18_sf"/>
</dbReference>
<dbReference type="NCBIfam" id="TIGR00165">
    <property type="entry name" value="S18"/>
    <property type="match status" value="1"/>
</dbReference>
<dbReference type="PANTHER" id="PTHR13479">
    <property type="entry name" value="30S RIBOSOMAL PROTEIN S18"/>
    <property type="match status" value="1"/>
</dbReference>
<dbReference type="PANTHER" id="PTHR13479:SF40">
    <property type="entry name" value="SMALL RIBOSOMAL SUBUNIT PROTEIN BS18M"/>
    <property type="match status" value="1"/>
</dbReference>
<dbReference type="Pfam" id="PF01084">
    <property type="entry name" value="Ribosomal_S18"/>
    <property type="match status" value="1"/>
</dbReference>
<dbReference type="PRINTS" id="PR00974">
    <property type="entry name" value="RIBOSOMALS18"/>
</dbReference>
<dbReference type="SUPFAM" id="SSF46911">
    <property type="entry name" value="Ribosomal protein S18"/>
    <property type="match status" value="1"/>
</dbReference>
<dbReference type="PROSITE" id="PS00057">
    <property type="entry name" value="RIBOSOMAL_S18"/>
    <property type="match status" value="1"/>
</dbReference>
<keyword id="KW-0687">Ribonucleoprotein</keyword>
<keyword id="KW-0689">Ribosomal protein</keyword>
<keyword id="KW-0694">RNA-binding</keyword>
<keyword id="KW-0699">rRNA-binding</keyword>
<sequence>MANKPFFRRRKVCPFSGDNAPVIDYKDTRLLQRYISERGKIVPSRITAVSAKKQRELAAAIKRARFLALLPYAVK</sequence>